<feature type="signal peptide" evidence="2">
    <location>
        <begin position="1"/>
        <end position="24"/>
    </location>
</feature>
<feature type="chain" id="PRO_0000295068" description="Cysteine-rich receptor-like protein kinase 21">
    <location>
        <begin position="25"/>
        <end position="690"/>
    </location>
</feature>
<feature type="topological domain" description="Extracellular" evidence="2">
    <location>
        <begin position="25"/>
        <end position="281"/>
    </location>
</feature>
<feature type="transmembrane region" description="Helical" evidence="2">
    <location>
        <begin position="282"/>
        <end position="302"/>
    </location>
</feature>
<feature type="topological domain" description="Cytoplasmic" evidence="2">
    <location>
        <begin position="303"/>
        <end position="690"/>
    </location>
</feature>
<feature type="domain" description="Gnk2-homologous 1" evidence="4">
    <location>
        <begin position="25"/>
        <end position="129"/>
    </location>
</feature>
<feature type="domain" description="Gnk2-homologous 2" evidence="4">
    <location>
        <begin position="140"/>
        <end position="246"/>
    </location>
</feature>
<feature type="domain" description="Protein kinase" evidence="3">
    <location>
        <begin position="363"/>
        <end position="640"/>
    </location>
</feature>
<feature type="active site" description="Proton acceptor" evidence="3 5">
    <location>
        <position position="488"/>
    </location>
</feature>
<feature type="binding site" evidence="3">
    <location>
        <begin position="369"/>
        <end position="377"/>
    </location>
    <ligand>
        <name>ATP</name>
        <dbReference type="ChEBI" id="CHEBI:30616"/>
    </ligand>
</feature>
<feature type="binding site" evidence="3">
    <location>
        <position position="391"/>
    </location>
    <ligand>
        <name>ATP</name>
        <dbReference type="ChEBI" id="CHEBI:30616"/>
    </ligand>
</feature>
<feature type="modified residue" description="Phosphotyrosine" evidence="1">
    <location>
        <position position="436"/>
    </location>
</feature>
<feature type="modified residue" description="Phosphoserine" evidence="1">
    <location>
        <position position="492"/>
    </location>
</feature>
<feature type="modified residue" description="Phosphothreonine" evidence="1">
    <location>
        <position position="528"/>
    </location>
</feature>
<feature type="modified residue" description="Phosphotyrosine" evidence="1">
    <location>
        <position position="536"/>
    </location>
</feature>
<feature type="glycosylation site" description="N-linked (GlcNAc...) asparagine" evidence="2">
    <location>
        <position position="130"/>
    </location>
</feature>
<feature type="glycosylation site" description="N-linked (GlcNAc...) asparagine" evidence="2">
    <location>
        <position position="148"/>
    </location>
</feature>
<feature type="glycosylation site" description="N-linked (GlcNAc...) asparagine" evidence="2">
    <location>
        <position position="155"/>
    </location>
</feature>
<feature type="glycosylation site" description="N-linked (GlcNAc...) asparagine" evidence="2">
    <location>
        <position position="220"/>
    </location>
</feature>
<feature type="glycosylation site" description="N-linked (GlcNAc...) asparagine" evidence="2">
    <location>
        <position position="268"/>
    </location>
</feature>
<feature type="glycosylation site" description="N-linked (GlcNAc...) asparagine" evidence="2">
    <location>
        <position position="276"/>
    </location>
</feature>
<feature type="splice variant" id="VSP_026695" description="In isoform 2." evidence="6">
    <location>
        <begin position="122"/>
        <end position="164"/>
    </location>
</feature>
<evidence type="ECO:0000250" key="1">
    <source>
        <dbReference type="UniProtKB" id="O48814"/>
    </source>
</evidence>
<evidence type="ECO:0000255" key="2"/>
<evidence type="ECO:0000255" key="3">
    <source>
        <dbReference type="PROSITE-ProRule" id="PRU00159"/>
    </source>
</evidence>
<evidence type="ECO:0000255" key="4">
    <source>
        <dbReference type="PROSITE-ProRule" id="PRU00806"/>
    </source>
</evidence>
<evidence type="ECO:0000255" key="5">
    <source>
        <dbReference type="PROSITE-ProRule" id="PRU10027"/>
    </source>
</evidence>
<evidence type="ECO:0000303" key="6">
    <source>
    </source>
</evidence>
<evidence type="ECO:0000305" key="7"/>
<organism>
    <name type="scientific">Arabidopsis thaliana</name>
    <name type="common">Mouse-ear cress</name>
    <dbReference type="NCBI Taxonomy" id="3702"/>
    <lineage>
        <taxon>Eukaryota</taxon>
        <taxon>Viridiplantae</taxon>
        <taxon>Streptophyta</taxon>
        <taxon>Embryophyta</taxon>
        <taxon>Tracheophyta</taxon>
        <taxon>Spermatophyta</taxon>
        <taxon>Magnoliopsida</taxon>
        <taxon>eudicotyledons</taxon>
        <taxon>Gunneridae</taxon>
        <taxon>Pentapetalae</taxon>
        <taxon>rosids</taxon>
        <taxon>malvids</taxon>
        <taxon>Brassicales</taxon>
        <taxon>Brassicaceae</taxon>
        <taxon>Camelineae</taxon>
        <taxon>Arabidopsis</taxon>
    </lineage>
</organism>
<gene>
    <name type="primary">CRK21</name>
    <name type="ordered locus">At4g23290</name>
    <name type="ORF">F21P8.180</name>
</gene>
<keyword id="KW-0025">Alternative splicing</keyword>
<keyword id="KW-0067">ATP-binding</keyword>
<keyword id="KW-0325">Glycoprotein</keyword>
<keyword id="KW-0418">Kinase</keyword>
<keyword id="KW-0472">Membrane</keyword>
<keyword id="KW-0547">Nucleotide-binding</keyword>
<keyword id="KW-0597">Phosphoprotein</keyword>
<keyword id="KW-0675">Receptor</keyword>
<keyword id="KW-1185">Reference proteome</keyword>
<keyword id="KW-0677">Repeat</keyword>
<keyword id="KW-0723">Serine/threonine-protein kinase</keyword>
<keyword id="KW-0732">Signal</keyword>
<keyword id="KW-0808">Transferase</keyword>
<keyword id="KW-0812">Transmembrane</keyword>
<keyword id="KW-1133">Transmembrane helix</keyword>
<proteinExistence type="evidence at transcript level"/>
<protein>
    <recommendedName>
        <fullName>Cysteine-rich receptor-like protein kinase 21</fullName>
        <shortName>Cysteine-rich RLK21</shortName>
        <ecNumber>2.7.11.-</ecNumber>
    </recommendedName>
</protein>
<sequence length="690" mass="76859">MQKNKMVDLRAIFWFVVISSCAVAAPTCIQRSDFFKANGPYDINLRAMLSSLPSRVKDNEGFYKTPFKPGPNIAHGLGMCSRGTTTQDCSDCITSVSHTLLHTCPNQAEAIDWSSGDSLCLVRYSNHLINGSLDEDIIWAEYIEYKYNTSFGQTNLTEFKSTWQALMDRVINKVDGSLYANSIQELGSFPFRSIYAIAQCNKDLTKLNCEKCLQHLRIDNRSCCRGIQVGYIARTSCFMRWDLQPFLGLFINGMLPTPPSELDNGHSNTTKKDGKNISTGSIVAIAVVSVVVSTVLLALGYAVSRRRKAYQSFASENGYFSVSRRPRRPYGTASPDDATDDLTASSGSLRFDFRAIKAATSNFHKSNKLGHGGFGAVYKGMFPNGTEVAAKRLSKPSDQGEPEFKNEVLLVARLQHKNLVGLLGFSVEGEEKILVYEFVPNKSLDHFLFDPIKRVQLDWPRRHNIIEGITRGILYLHQDSRLTIIHRDLKASNILLDAEMNPKIADFGLARNFRVNQTEANTGRVVGTFGYMPPEYVANGQFSTKSDVYSFGVLILEIIGGKKNSSFHQIDGSVSNLVTHVWRLRNNGSLLELVDPAIGENYDKDEVIRCIHIGLLCVQENPDDRPSMSTIFRMLTNVSITLPVPQPPGFFFRERSEPNPLAERLLPGPSTSMSFTCSVDDASITSVRPR</sequence>
<accession>Q3E9X6</accession>
<accession>F4JNH7</accession>
<accession>O65480</accession>
<accession>Q8LPL4</accession>
<name>CRK21_ARATH</name>
<reference key="1">
    <citation type="journal article" date="1999" name="Nature">
        <title>Sequence and analysis of chromosome 4 of the plant Arabidopsis thaliana.</title>
        <authorList>
            <person name="Mayer K.F.X."/>
            <person name="Schueller C."/>
            <person name="Wambutt R."/>
            <person name="Murphy G."/>
            <person name="Volckaert G."/>
            <person name="Pohl T."/>
            <person name="Duesterhoeft A."/>
            <person name="Stiekema W."/>
            <person name="Entian K.-D."/>
            <person name="Terryn N."/>
            <person name="Harris B."/>
            <person name="Ansorge W."/>
            <person name="Brandt P."/>
            <person name="Grivell L.A."/>
            <person name="Rieger M."/>
            <person name="Weichselgartner M."/>
            <person name="de Simone V."/>
            <person name="Obermaier B."/>
            <person name="Mache R."/>
            <person name="Mueller M."/>
            <person name="Kreis M."/>
            <person name="Delseny M."/>
            <person name="Puigdomenech P."/>
            <person name="Watson M."/>
            <person name="Schmidtheini T."/>
            <person name="Reichert B."/>
            <person name="Portetelle D."/>
            <person name="Perez-Alonso M."/>
            <person name="Boutry M."/>
            <person name="Bancroft I."/>
            <person name="Vos P."/>
            <person name="Hoheisel J."/>
            <person name="Zimmermann W."/>
            <person name="Wedler H."/>
            <person name="Ridley P."/>
            <person name="Langham S.-A."/>
            <person name="McCullagh B."/>
            <person name="Bilham L."/>
            <person name="Robben J."/>
            <person name="van der Schueren J."/>
            <person name="Grymonprez B."/>
            <person name="Chuang Y.-J."/>
            <person name="Vandenbussche F."/>
            <person name="Braeken M."/>
            <person name="Weltjens I."/>
            <person name="Voet M."/>
            <person name="Bastiaens I."/>
            <person name="Aert R."/>
            <person name="Defoor E."/>
            <person name="Weitzenegger T."/>
            <person name="Bothe G."/>
            <person name="Ramsperger U."/>
            <person name="Hilbert H."/>
            <person name="Braun M."/>
            <person name="Holzer E."/>
            <person name="Brandt A."/>
            <person name="Peters S."/>
            <person name="van Staveren M."/>
            <person name="Dirkse W."/>
            <person name="Mooijman P."/>
            <person name="Klein Lankhorst R."/>
            <person name="Rose M."/>
            <person name="Hauf J."/>
            <person name="Koetter P."/>
            <person name="Berneiser S."/>
            <person name="Hempel S."/>
            <person name="Feldpausch M."/>
            <person name="Lamberth S."/>
            <person name="Van den Daele H."/>
            <person name="De Keyser A."/>
            <person name="Buysshaert C."/>
            <person name="Gielen J."/>
            <person name="Villarroel R."/>
            <person name="De Clercq R."/>
            <person name="van Montagu M."/>
            <person name="Rogers J."/>
            <person name="Cronin A."/>
            <person name="Quail M.A."/>
            <person name="Bray-Allen S."/>
            <person name="Clark L."/>
            <person name="Doggett J."/>
            <person name="Hall S."/>
            <person name="Kay M."/>
            <person name="Lennard N."/>
            <person name="McLay K."/>
            <person name="Mayes R."/>
            <person name="Pettett A."/>
            <person name="Rajandream M.A."/>
            <person name="Lyne M."/>
            <person name="Benes V."/>
            <person name="Rechmann S."/>
            <person name="Borkova D."/>
            <person name="Bloecker H."/>
            <person name="Scharfe M."/>
            <person name="Grimm M."/>
            <person name="Loehnert T.-H."/>
            <person name="Dose S."/>
            <person name="de Haan M."/>
            <person name="Maarse A.C."/>
            <person name="Schaefer M."/>
            <person name="Mueller-Auer S."/>
            <person name="Gabel C."/>
            <person name="Fuchs M."/>
            <person name="Fartmann B."/>
            <person name="Granderath K."/>
            <person name="Dauner D."/>
            <person name="Herzl A."/>
            <person name="Neumann S."/>
            <person name="Argiriou A."/>
            <person name="Vitale D."/>
            <person name="Liguori R."/>
            <person name="Piravandi E."/>
            <person name="Massenet O."/>
            <person name="Quigley F."/>
            <person name="Clabauld G."/>
            <person name="Muendlein A."/>
            <person name="Felber R."/>
            <person name="Schnabl S."/>
            <person name="Hiller R."/>
            <person name="Schmidt W."/>
            <person name="Lecharny A."/>
            <person name="Aubourg S."/>
            <person name="Chefdor F."/>
            <person name="Cooke R."/>
            <person name="Berger C."/>
            <person name="Monfort A."/>
            <person name="Casacuberta E."/>
            <person name="Gibbons T."/>
            <person name="Weber N."/>
            <person name="Vandenbol M."/>
            <person name="Bargues M."/>
            <person name="Terol J."/>
            <person name="Torres A."/>
            <person name="Perez-Perez A."/>
            <person name="Purnelle B."/>
            <person name="Bent E."/>
            <person name="Johnson S."/>
            <person name="Tacon D."/>
            <person name="Jesse T."/>
            <person name="Heijnen L."/>
            <person name="Schwarz S."/>
            <person name="Scholler P."/>
            <person name="Heber S."/>
            <person name="Francs P."/>
            <person name="Bielke C."/>
            <person name="Frishman D."/>
            <person name="Haase D."/>
            <person name="Lemcke K."/>
            <person name="Mewes H.-W."/>
            <person name="Stocker S."/>
            <person name="Zaccaria P."/>
            <person name="Bevan M."/>
            <person name="Wilson R.K."/>
            <person name="de la Bastide M."/>
            <person name="Habermann K."/>
            <person name="Parnell L."/>
            <person name="Dedhia N."/>
            <person name="Gnoj L."/>
            <person name="Schutz K."/>
            <person name="Huang E."/>
            <person name="Spiegel L."/>
            <person name="Sekhon M."/>
            <person name="Murray J."/>
            <person name="Sheet P."/>
            <person name="Cordes M."/>
            <person name="Abu-Threideh J."/>
            <person name="Stoneking T."/>
            <person name="Kalicki J."/>
            <person name="Graves T."/>
            <person name="Harmon G."/>
            <person name="Edwards J."/>
            <person name="Latreille P."/>
            <person name="Courtney L."/>
            <person name="Cloud J."/>
            <person name="Abbott A."/>
            <person name="Scott K."/>
            <person name="Johnson D."/>
            <person name="Minx P."/>
            <person name="Bentley D."/>
            <person name="Fulton B."/>
            <person name="Miller N."/>
            <person name="Greco T."/>
            <person name="Kemp K."/>
            <person name="Kramer J."/>
            <person name="Fulton L."/>
            <person name="Mardis E."/>
            <person name="Dante M."/>
            <person name="Pepin K."/>
            <person name="Hillier L.W."/>
            <person name="Nelson J."/>
            <person name="Spieth J."/>
            <person name="Ryan E."/>
            <person name="Andrews S."/>
            <person name="Geisel C."/>
            <person name="Layman D."/>
            <person name="Du H."/>
            <person name="Ali J."/>
            <person name="Berghoff A."/>
            <person name="Jones K."/>
            <person name="Drone K."/>
            <person name="Cotton M."/>
            <person name="Joshu C."/>
            <person name="Antonoiu B."/>
            <person name="Zidanic M."/>
            <person name="Strong C."/>
            <person name="Sun H."/>
            <person name="Lamar B."/>
            <person name="Yordan C."/>
            <person name="Ma P."/>
            <person name="Zhong J."/>
            <person name="Preston R."/>
            <person name="Vil D."/>
            <person name="Shekher M."/>
            <person name="Matero A."/>
            <person name="Shah R."/>
            <person name="Swaby I.K."/>
            <person name="O'Shaughnessy A."/>
            <person name="Rodriguez M."/>
            <person name="Hoffman J."/>
            <person name="Till S."/>
            <person name="Granat S."/>
            <person name="Shohdy N."/>
            <person name="Hasegawa A."/>
            <person name="Hameed A."/>
            <person name="Lodhi M."/>
            <person name="Johnson A."/>
            <person name="Chen E."/>
            <person name="Marra M.A."/>
            <person name="Martienssen R."/>
            <person name="McCombie W.R."/>
        </authorList>
    </citation>
    <scope>NUCLEOTIDE SEQUENCE [LARGE SCALE GENOMIC DNA]</scope>
    <source>
        <strain>cv. Columbia</strain>
    </source>
</reference>
<reference key="2">
    <citation type="journal article" date="2017" name="Plant J.">
        <title>Araport11: a complete reannotation of the Arabidopsis thaliana reference genome.</title>
        <authorList>
            <person name="Cheng C.Y."/>
            <person name="Krishnakumar V."/>
            <person name="Chan A.P."/>
            <person name="Thibaud-Nissen F."/>
            <person name="Schobel S."/>
            <person name="Town C.D."/>
        </authorList>
    </citation>
    <scope>GENOME REANNOTATION</scope>
    <source>
        <strain>cv. Columbia</strain>
    </source>
</reference>
<reference key="3">
    <citation type="journal article" date="2003" name="Science">
        <title>Empirical analysis of transcriptional activity in the Arabidopsis genome.</title>
        <authorList>
            <person name="Yamada K."/>
            <person name="Lim J."/>
            <person name="Dale J.M."/>
            <person name="Chen H."/>
            <person name="Shinn P."/>
            <person name="Palm C.J."/>
            <person name="Southwick A.M."/>
            <person name="Wu H.C."/>
            <person name="Kim C.J."/>
            <person name="Nguyen M."/>
            <person name="Pham P.K."/>
            <person name="Cheuk R.F."/>
            <person name="Karlin-Newmann G."/>
            <person name="Liu S.X."/>
            <person name="Lam B."/>
            <person name="Sakano H."/>
            <person name="Wu T."/>
            <person name="Yu G."/>
            <person name="Miranda M."/>
            <person name="Quach H.L."/>
            <person name="Tripp M."/>
            <person name="Chang C.H."/>
            <person name="Lee J.M."/>
            <person name="Toriumi M.J."/>
            <person name="Chan M.M."/>
            <person name="Tang C.C."/>
            <person name="Onodera C.S."/>
            <person name="Deng J.M."/>
            <person name="Akiyama K."/>
            <person name="Ansari Y."/>
            <person name="Arakawa T."/>
            <person name="Banh J."/>
            <person name="Banno F."/>
            <person name="Bowser L."/>
            <person name="Brooks S.Y."/>
            <person name="Carninci P."/>
            <person name="Chao Q."/>
            <person name="Choy N."/>
            <person name="Enju A."/>
            <person name="Goldsmith A.D."/>
            <person name="Gurjal M."/>
            <person name="Hansen N.F."/>
            <person name="Hayashizaki Y."/>
            <person name="Johnson-Hopson C."/>
            <person name="Hsuan V.W."/>
            <person name="Iida K."/>
            <person name="Karnes M."/>
            <person name="Khan S."/>
            <person name="Koesema E."/>
            <person name="Ishida J."/>
            <person name="Jiang P.X."/>
            <person name="Jones T."/>
            <person name="Kawai J."/>
            <person name="Kamiya A."/>
            <person name="Meyers C."/>
            <person name="Nakajima M."/>
            <person name="Narusaka M."/>
            <person name="Seki M."/>
            <person name="Sakurai T."/>
            <person name="Satou M."/>
            <person name="Tamse R."/>
            <person name="Vaysberg M."/>
            <person name="Wallender E.K."/>
            <person name="Wong C."/>
            <person name="Yamamura Y."/>
            <person name="Yuan S."/>
            <person name="Shinozaki K."/>
            <person name="Davis R.W."/>
            <person name="Theologis A."/>
            <person name="Ecker J.R."/>
        </authorList>
    </citation>
    <scope>NUCLEOTIDE SEQUENCE [LARGE SCALE MRNA] OF 10-690 (ISOFORM 2)</scope>
    <source>
        <strain>cv. Columbia</strain>
    </source>
</reference>
<reference key="4">
    <citation type="journal article" date="2001" name="Plant Physiol.">
        <title>A superfamily of proteins with novel cysteine-rich repeats.</title>
        <authorList>
            <person name="Chen Z."/>
        </authorList>
    </citation>
    <scope>GENE FAMILY ORGANIZATION</scope>
    <scope>NOMENCLATURE</scope>
</reference>
<dbReference type="EC" id="2.7.11.-"/>
<dbReference type="EMBL" id="AL022347">
    <property type="protein sequence ID" value="CAA18476.1"/>
    <property type="status" value="ALT_SEQ"/>
    <property type="molecule type" value="Genomic_DNA"/>
</dbReference>
<dbReference type="EMBL" id="AL161559">
    <property type="protein sequence ID" value="CAB79284.1"/>
    <property type="status" value="ALT_SEQ"/>
    <property type="molecule type" value="Genomic_DNA"/>
</dbReference>
<dbReference type="EMBL" id="CP002687">
    <property type="protein sequence ID" value="AEE84734.2"/>
    <property type="molecule type" value="Genomic_DNA"/>
</dbReference>
<dbReference type="EMBL" id="CP002687">
    <property type="protein sequence ID" value="AEE84735.1"/>
    <property type="molecule type" value="Genomic_DNA"/>
</dbReference>
<dbReference type="EMBL" id="AY099582">
    <property type="protein sequence ID" value="AAM20434.1"/>
    <property type="status" value="ALT_INIT"/>
    <property type="molecule type" value="mRNA"/>
</dbReference>
<dbReference type="EMBL" id="BT000241">
    <property type="protein sequence ID" value="AAN15560.1"/>
    <property type="status" value="ALT_INIT"/>
    <property type="molecule type" value="mRNA"/>
</dbReference>
<dbReference type="PIR" id="T04846">
    <property type="entry name" value="T04846"/>
</dbReference>
<dbReference type="RefSeq" id="NP_194060.3">
    <molecule id="Q3E9X6-1"/>
    <property type="nucleotide sequence ID" value="NM_118458.4"/>
</dbReference>
<dbReference type="RefSeq" id="NP_849550.2">
    <molecule id="Q3E9X6-2"/>
    <property type="nucleotide sequence ID" value="NM_179219.2"/>
</dbReference>
<dbReference type="SMR" id="Q3E9X6"/>
<dbReference type="BioGRID" id="13717">
    <property type="interactions" value="1"/>
</dbReference>
<dbReference type="IntAct" id="Q3E9X6">
    <property type="interactions" value="1"/>
</dbReference>
<dbReference type="STRING" id="3702.Q3E9X6"/>
<dbReference type="GlyCosmos" id="Q3E9X6">
    <property type="glycosylation" value="6 sites, No reported glycans"/>
</dbReference>
<dbReference type="GlyGen" id="Q3E9X6">
    <property type="glycosylation" value="7 sites"/>
</dbReference>
<dbReference type="iPTMnet" id="Q3E9X6"/>
<dbReference type="PaxDb" id="3702-AT4G23290.2"/>
<dbReference type="ProteomicsDB" id="220414">
    <molecule id="Q3E9X6-1"/>
</dbReference>
<dbReference type="EnsemblPlants" id="AT4G23290.1">
    <molecule id="Q3E9X6-2"/>
    <property type="protein sequence ID" value="AT4G23290.1"/>
    <property type="gene ID" value="AT4G23290"/>
</dbReference>
<dbReference type="EnsemblPlants" id="AT4G23290.2">
    <molecule id="Q3E9X6-1"/>
    <property type="protein sequence ID" value="AT4G23290.2"/>
    <property type="gene ID" value="AT4G23290"/>
</dbReference>
<dbReference type="GeneID" id="828428"/>
<dbReference type="Gramene" id="AT4G23290.1">
    <molecule id="Q3E9X6-2"/>
    <property type="protein sequence ID" value="AT4G23290.1"/>
    <property type="gene ID" value="AT4G23290"/>
</dbReference>
<dbReference type="Gramene" id="AT4G23290.2">
    <molecule id="Q3E9X6-1"/>
    <property type="protein sequence ID" value="AT4G23290.2"/>
    <property type="gene ID" value="AT4G23290"/>
</dbReference>
<dbReference type="KEGG" id="ath:AT4G23290"/>
<dbReference type="Araport" id="AT4G23290"/>
<dbReference type="TAIR" id="AT4G23290">
    <property type="gene designation" value="CRK21"/>
</dbReference>
<dbReference type="eggNOG" id="ENOG502QWDY">
    <property type="taxonomic scope" value="Eukaryota"/>
</dbReference>
<dbReference type="HOGENOM" id="CLU_000288_35_2_1"/>
<dbReference type="InParanoid" id="Q3E9X6"/>
<dbReference type="OMA" id="YTNESAF"/>
<dbReference type="PhylomeDB" id="Q3E9X6"/>
<dbReference type="PRO" id="PR:Q3E9X6"/>
<dbReference type="Proteomes" id="UP000006548">
    <property type="component" value="Chromosome 4"/>
</dbReference>
<dbReference type="ExpressionAtlas" id="Q3E9X6">
    <property type="expression patterns" value="baseline and differential"/>
</dbReference>
<dbReference type="GO" id="GO:0016020">
    <property type="term" value="C:membrane"/>
    <property type="evidence" value="ECO:0007669"/>
    <property type="project" value="UniProtKB-SubCell"/>
</dbReference>
<dbReference type="GO" id="GO:0005739">
    <property type="term" value="C:mitochondrion"/>
    <property type="evidence" value="ECO:0007005"/>
    <property type="project" value="TAIR"/>
</dbReference>
<dbReference type="GO" id="GO:0005524">
    <property type="term" value="F:ATP binding"/>
    <property type="evidence" value="ECO:0007669"/>
    <property type="project" value="UniProtKB-KW"/>
</dbReference>
<dbReference type="GO" id="GO:0106310">
    <property type="term" value="F:protein serine kinase activity"/>
    <property type="evidence" value="ECO:0007669"/>
    <property type="project" value="RHEA"/>
</dbReference>
<dbReference type="GO" id="GO:0004674">
    <property type="term" value="F:protein serine/threonine kinase activity"/>
    <property type="evidence" value="ECO:0007669"/>
    <property type="project" value="UniProtKB-KW"/>
</dbReference>
<dbReference type="CDD" id="cd23509">
    <property type="entry name" value="Gnk2-like"/>
    <property type="match status" value="2"/>
</dbReference>
<dbReference type="CDD" id="cd14066">
    <property type="entry name" value="STKc_IRAK"/>
    <property type="match status" value="1"/>
</dbReference>
<dbReference type="FunFam" id="3.30.200.20:FF:000142">
    <property type="entry name" value="Cysteine-rich receptor-like protein kinase 10"/>
    <property type="match status" value="1"/>
</dbReference>
<dbReference type="FunFam" id="1.10.510.10:FF:000129">
    <property type="entry name" value="cysteine-rich receptor-like protein kinase 10"/>
    <property type="match status" value="1"/>
</dbReference>
<dbReference type="Gene3D" id="3.30.430.20">
    <property type="entry name" value="Gnk2 domain, C-X8-C-X2-C motif"/>
    <property type="match status" value="2"/>
</dbReference>
<dbReference type="Gene3D" id="3.30.200.20">
    <property type="entry name" value="Phosphorylase Kinase, domain 1"/>
    <property type="match status" value="1"/>
</dbReference>
<dbReference type="Gene3D" id="1.10.510.10">
    <property type="entry name" value="Transferase(Phosphotransferase) domain 1"/>
    <property type="match status" value="1"/>
</dbReference>
<dbReference type="InterPro" id="IPR002902">
    <property type="entry name" value="GNK2"/>
</dbReference>
<dbReference type="InterPro" id="IPR038408">
    <property type="entry name" value="GNK2_sf"/>
</dbReference>
<dbReference type="InterPro" id="IPR011009">
    <property type="entry name" value="Kinase-like_dom_sf"/>
</dbReference>
<dbReference type="InterPro" id="IPR000719">
    <property type="entry name" value="Prot_kinase_dom"/>
</dbReference>
<dbReference type="InterPro" id="IPR017441">
    <property type="entry name" value="Protein_kinase_ATP_BS"/>
</dbReference>
<dbReference type="InterPro" id="IPR008271">
    <property type="entry name" value="Ser/Thr_kinase_AS"/>
</dbReference>
<dbReference type="PANTHER" id="PTHR27002:SF742">
    <property type="entry name" value="CYSTEINE-RICH RECEPTOR-LIKE PROTEIN KINASE 21"/>
    <property type="match status" value="1"/>
</dbReference>
<dbReference type="PANTHER" id="PTHR27002">
    <property type="entry name" value="RECEPTOR-LIKE SERINE/THREONINE-PROTEIN KINASE SD1-8"/>
    <property type="match status" value="1"/>
</dbReference>
<dbReference type="Pfam" id="PF00069">
    <property type="entry name" value="Pkinase"/>
    <property type="match status" value="1"/>
</dbReference>
<dbReference type="Pfam" id="PF01657">
    <property type="entry name" value="Stress-antifung"/>
    <property type="match status" value="2"/>
</dbReference>
<dbReference type="SMART" id="SM00220">
    <property type="entry name" value="S_TKc"/>
    <property type="match status" value="1"/>
</dbReference>
<dbReference type="SUPFAM" id="SSF56112">
    <property type="entry name" value="Protein kinase-like (PK-like)"/>
    <property type="match status" value="1"/>
</dbReference>
<dbReference type="PROSITE" id="PS51473">
    <property type="entry name" value="GNK2"/>
    <property type="match status" value="2"/>
</dbReference>
<dbReference type="PROSITE" id="PS00107">
    <property type="entry name" value="PROTEIN_KINASE_ATP"/>
    <property type="match status" value="1"/>
</dbReference>
<dbReference type="PROSITE" id="PS50011">
    <property type="entry name" value="PROTEIN_KINASE_DOM"/>
    <property type="match status" value="1"/>
</dbReference>
<dbReference type="PROSITE" id="PS00108">
    <property type="entry name" value="PROTEIN_KINASE_ST"/>
    <property type="match status" value="1"/>
</dbReference>
<comment type="catalytic activity">
    <reaction>
        <text>L-seryl-[protein] + ATP = O-phospho-L-seryl-[protein] + ADP + H(+)</text>
        <dbReference type="Rhea" id="RHEA:17989"/>
        <dbReference type="Rhea" id="RHEA-COMP:9863"/>
        <dbReference type="Rhea" id="RHEA-COMP:11604"/>
        <dbReference type="ChEBI" id="CHEBI:15378"/>
        <dbReference type="ChEBI" id="CHEBI:29999"/>
        <dbReference type="ChEBI" id="CHEBI:30616"/>
        <dbReference type="ChEBI" id="CHEBI:83421"/>
        <dbReference type="ChEBI" id="CHEBI:456216"/>
    </reaction>
</comment>
<comment type="catalytic activity">
    <reaction>
        <text>L-threonyl-[protein] + ATP = O-phospho-L-threonyl-[protein] + ADP + H(+)</text>
        <dbReference type="Rhea" id="RHEA:46608"/>
        <dbReference type="Rhea" id="RHEA-COMP:11060"/>
        <dbReference type="Rhea" id="RHEA-COMP:11605"/>
        <dbReference type="ChEBI" id="CHEBI:15378"/>
        <dbReference type="ChEBI" id="CHEBI:30013"/>
        <dbReference type="ChEBI" id="CHEBI:30616"/>
        <dbReference type="ChEBI" id="CHEBI:61977"/>
        <dbReference type="ChEBI" id="CHEBI:456216"/>
    </reaction>
</comment>
<comment type="subcellular location">
    <subcellularLocation>
        <location evidence="7">Membrane</location>
        <topology evidence="7">Single-pass membrane protein</topology>
    </subcellularLocation>
</comment>
<comment type="alternative products">
    <event type="alternative splicing"/>
    <isoform>
        <id>Q3E9X6-1</id>
        <name>1</name>
        <sequence type="displayed"/>
    </isoform>
    <isoform>
        <id>Q3E9X6-2</id>
        <name>2</name>
        <sequence type="described" ref="VSP_026695"/>
    </isoform>
</comment>
<comment type="similarity">
    <text evidence="3">Belongs to the protein kinase superfamily. Ser/Thr protein kinase family. CRK subfamily.</text>
</comment>
<comment type="sequence caution" evidence="7">
    <conflict type="erroneous initiation">
        <sequence resource="EMBL-CDS" id="AAM20434"/>
    </conflict>
</comment>
<comment type="sequence caution" evidence="7">
    <conflict type="erroneous initiation">
        <sequence resource="EMBL-CDS" id="AAN15560"/>
    </conflict>
</comment>
<comment type="sequence caution" evidence="7">
    <conflict type="erroneous gene model prediction">
        <sequence resource="EMBL-CDS" id="CAA18476"/>
    </conflict>
</comment>
<comment type="sequence caution" evidence="7">
    <conflict type="erroneous gene model prediction">
        <sequence resource="EMBL-CDS" id="CAB79284"/>
    </conflict>
</comment>